<sequence length="107" mass="12360">MTHKRTKRQPAIAAGLNAPRRNRVGRQHGWPADVPSAEQRRAQRQRDLEAIRRAYAEMVATSHEIDDDTAELALLSMHLDDEQRRLEAGMKLGWHPYHFPDEPDSKQ</sequence>
<keyword id="KW-1185">Reference proteome</keyword>
<keyword id="KW-1277">Toxin-antitoxin system</keyword>
<organism>
    <name type="scientific">Mycobacterium tuberculosis (strain ATCC 25618 / H37Rv)</name>
    <dbReference type="NCBI Taxonomy" id="83332"/>
    <lineage>
        <taxon>Bacteria</taxon>
        <taxon>Bacillati</taxon>
        <taxon>Actinomycetota</taxon>
        <taxon>Actinomycetes</taxon>
        <taxon>Mycobacteriales</taxon>
        <taxon>Mycobacteriaceae</taxon>
        <taxon>Mycobacterium</taxon>
        <taxon>Mycobacterium tuberculosis complex</taxon>
    </lineage>
</organism>
<protein>
    <recommendedName>
        <fullName>Toxin Rv2653c</fullName>
    </recommendedName>
</protein>
<comment type="function">
    <text evidence="2">Toxic component of a type II toxin-antitoxin (TA) system. Upon expression in M.smegmatis inhibits colony formation. Its toxic effect is neutralized by coexpression with cognate antitoxin Rv2654c.</text>
</comment>
<gene>
    <name type="ordered locus">Rv2653c</name>
</gene>
<evidence type="ECO:0000256" key="1">
    <source>
        <dbReference type="SAM" id="MobiDB-lite"/>
    </source>
</evidence>
<evidence type="ECO:0000269" key="2">
    <source>
    </source>
</evidence>
<accession>P9WJ13</accession>
<accession>L0TAH9</accession>
<accession>P71950</accession>
<accession>Q7D6U1</accession>
<feature type="chain" id="PRO_0000406887" description="Toxin Rv2653c">
    <location>
        <begin position="1"/>
        <end position="107"/>
    </location>
</feature>
<feature type="region of interest" description="Disordered" evidence="1">
    <location>
        <begin position="1"/>
        <end position="42"/>
    </location>
</feature>
<proteinExistence type="evidence at protein level"/>
<dbReference type="EMBL" id="AL123456">
    <property type="protein sequence ID" value="CCP45451.1"/>
    <property type="molecule type" value="Genomic_DNA"/>
</dbReference>
<dbReference type="PIR" id="A70966">
    <property type="entry name" value="A70966"/>
</dbReference>
<dbReference type="RefSeq" id="NP_217169.1">
    <property type="nucleotide sequence ID" value="NC_000962.3"/>
</dbReference>
<dbReference type="RefSeq" id="WP_003899414.1">
    <property type="nucleotide sequence ID" value="NZ_NVQJ01000079.1"/>
</dbReference>
<dbReference type="SMR" id="P9WJ13"/>
<dbReference type="STRING" id="83332.Rv2653c"/>
<dbReference type="PaxDb" id="83332-Rv2653c"/>
<dbReference type="GeneID" id="887367"/>
<dbReference type="KEGG" id="mtu:Rv2653c"/>
<dbReference type="KEGG" id="mtv:RVBD_2653c"/>
<dbReference type="TubercuList" id="Rv2653c"/>
<dbReference type="InParanoid" id="P9WJ13"/>
<dbReference type="Proteomes" id="UP000001584">
    <property type="component" value="Chromosome"/>
</dbReference>
<dbReference type="GO" id="GO:0045926">
    <property type="term" value="P:negative regulation of growth"/>
    <property type="evidence" value="ECO:0000315"/>
    <property type="project" value="MTBBASE"/>
</dbReference>
<name>Y2653_MYCTU</name>
<reference key="1">
    <citation type="journal article" date="1998" name="Nature">
        <title>Deciphering the biology of Mycobacterium tuberculosis from the complete genome sequence.</title>
        <authorList>
            <person name="Cole S.T."/>
            <person name="Brosch R."/>
            <person name="Parkhill J."/>
            <person name="Garnier T."/>
            <person name="Churcher C.M."/>
            <person name="Harris D.E."/>
            <person name="Gordon S.V."/>
            <person name="Eiglmeier K."/>
            <person name="Gas S."/>
            <person name="Barry C.E. III"/>
            <person name="Tekaia F."/>
            <person name="Badcock K."/>
            <person name="Basham D."/>
            <person name="Brown D."/>
            <person name="Chillingworth T."/>
            <person name="Connor R."/>
            <person name="Davies R.M."/>
            <person name="Devlin K."/>
            <person name="Feltwell T."/>
            <person name="Gentles S."/>
            <person name="Hamlin N."/>
            <person name="Holroyd S."/>
            <person name="Hornsby T."/>
            <person name="Jagels K."/>
            <person name="Krogh A."/>
            <person name="McLean J."/>
            <person name="Moule S."/>
            <person name="Murphy L.D."/>
            <person name="Oliver S."/>
            <person name="Osborne J."/>
            <person name="Quail M.A."/>
            <person name="Rajandream M.A."/>
            <person name="Rogers J."/>
            <person name="Rutter S."/>
            <person name="Seeger K."/>
            <person name="Skelton S."/>
            <person name="Squares S."/>
            <person name="Squares R."/>
            <person name="Sulston J.E."/>
            <person name="Taylor K."/>
            <person name="Whitehead S."/>
            <person name="Barrell B.G."/>
        </authorList>
    </citation>
    <scope>NUCLEOTIDE SEQUENCE [LARGE SCALE GENOMIC DNA]</scope>
    <source>
        <strain>ATCC 25618 / H37Rv</strain>
    </source>
</reference>
<reference key="2">
    <citation type="journal article" date="2009" name="PLoS Genet.">
        <title>Comprehensive functional analysis of Mycobacterium tuberculosis toxin-antitoxin systems: implications for pathogenesis, stress responses, and evolution.</title>
        <authorList>
            <person name="Ramage H.R."/>
            <person name="Connolly L.E."/>
            <person name="Cox J.S."/>
        </authorList>
    </citation>
    <scope>EXPRESSION IN M.SMEGMATIS</scope>
    <scope>FUNCTION AS A TOXIN</scope>
    <source>
        <strain>ATCC 35801 / TMC 107 / Erdman</strain>
    </source>
</reference>